<reference key="1">
    <citation type="journal article" date="2007" name="Environ. Microbiol.">
        <title>Whole-genome analysis of the ammonia-oxidizing bacterium, Nitrosomonas eutropha C91: implications for niche adaptation.</title>
        <authorList>
            <person name="Stein L.Y."/>
            <person name="Arp D.J."/>
            <person name="Berube P.M."/>
            <person name="Chain P.S."/>
            <person name="Hauser L."/>
            <person name="Jetten M.S."/>
            <person name="Klotz M.G."/>
            <person name="Larimer F.W."/>
            <person name="Norton J.M."/>
            <person name="Op den Camp H.J.M."/>
            <person name="Shin M."/>
            <person name="Wei X."/>
        </authorList>
    </citation>
    <scope>NUCLEOTIDE SEQUENCE [LARGE SCALE GENOMIC DNA]</scope>
    <source>
        <strain>DSM 101675 / C91 / Nm57</strain>
    </source>
</reference>
<keyword id="KW-0012">Acyltransferase</keyword>
<keyword id="KW-0963">Cytoplasm</keyword>
<keyword id="KW-0408">Iron</keyword>
<keyword id="KW-0479">Metal-binding</keyword>
<keyword id="KW-0808">Transferase</keyword>
<keyword id="KW-0819">tRNA processing</keyword>
<sequence length="338" mass="36268">MLVLGIETSCDETGVALYDTRRKLLGHALYSQVDMHRDYGGVVPELASRDHIRRVLPLVTQVLEQTNTSLETIDAIAYTQGPGLAGALLTGASISNALAFARNIPVLNIHHLEGHLLSPLLSDPAPDFPFVALLVSGGHTQLMHVKGIGQYKLLGETVDDAAGEAFDKTAKLLGLDYPGGKLLADLATQGQPGRFKLPRPMLNSDDLNFSFSGLKTAAALLINKQKANTQTRADIALAFEDAVTDVLVKKSIAALKITRLQQLVVAGGVGANSRLRQKLRHHLVGTGIAVFFPELEFCTDNGAMIALAGALRLQQLNEKPPGSDGSFTIKARWNLEDL</sequence>
<feature type="chain" id="PRO_0000303457" description="tRNA N6-adenosine threonylcarbamoyltransferase">
    <location>
        <begin position="1"/>
        <end position="338"/>
    </location>
</feature>
<feature type="binding site" evidence="1">
    <location>
        <position position="111"/>
    </location>
    <ligand>
        <name>Fe cation</name>
        <dbReference type="ChEBI" id="CHEBI:24875"/>
    </ligand>
</feature>
<feature type="binding site" evidence="1">
    <location>
        <position position="115"/>
    </location>
    <ligand>
        <name>Fe cation</name>
        <dbReference type="ChEBI" id="CHEBI:24875"/>
    </ligand>
</feature>
<feature type="binding site" evidence="1">
    <location>
        <begin position="134"/>
        <end position="138"/>
    </location>
    <ligand>
        <name>substrate</name>
    </ligand>
</feature>
<feature type="binding site" evidence="1">
    <location>
        <position position="167"/>
    </location>
    <ligand>
        <name>substrate</name>
    </ligand>
</feature>
<feature type="binding site" evidence="1">
    <location>
        <position position="180"/>
    </location>
    <ligand>
        <name>substrate</name>
    </ligand>
</feature>
<feature type="binding site" evidence="1">
    <location>
        <position position="272"/>
    </location>
    <ligand>
        <name>substrate</name>
    </ligand>
</feature>
<feature type="binding site" evidence="1">
    <location>
        <position position="300"/>
    </location>
    <ligand>
        <name>Fe cation</name>
        <dbReference type="ChEBI" id="CHEBI:24875"/>
    </ligand>
</feature>
<gene>
    <name evidence="1" type="primary">tsaD</name>
    <name type="synonym">gcp</name>
    <name type="ordered locus">Neut_0296</name>
</gene>
<proteinExistence type="inferred from homology"/>
<comment type="function">
    <text evidence="1">Required for the formation of a threonylcarbamoyl group on adenosine at position 37 (t(6)A37) in tRNAs that read codons beginning with adenine. Is involved in the transfer of the threonylcarbamoyl moiety of threonylcarbamoyl-AMP (TC-AMP) to the N6 group of A37, together with TsaE and TsaB. TsaD likely plays a direct catalytic role in this reaction.</text>
</comment>
<comment type="catalytic activity">
    <reaction evidence="1">
        <text>L-threonylcarbamoyladenylate + adenosine(37) in tRNA = N(6)-L-threonylcarbamoyladenosine(37) in tRNA + AMP + H(+)</text>
        <dbReference type="Rhea" id="RHEA:37059"/>
        <dbReference type="Rhea" id="RHEA-COMP:10162"/>
        <dbReference type="Rhea" id="RHEA-COMP:10163"/>
        <dbReference type="ChEBI" id="CHEBI:15378"/>
        <dbReference type="ChEBI" id="CHEBI:73682"/>
        <dbReference type="ChEBI" id="CHEBI:74411"/>
        <dbReference type="ChEBI" id="CHEBI:74418"/>
        <dbReference type="ChEBI" id="CHEBI:456215"/>
        <dbReference type="EC" id="2.3.1.234"/>
    </reaction>
</comment>
<comment type="cofactor">
    <cofactor evidence="1">
        <name>Fe(2+)</name>
        <dbReference type="ChEBI" id="CHEBI:29033"/>
    </cofactor>
    <text evidence="1">Binds 1 Fe(2+) ion per subunit.</text>
</comment>
<comment type="subcellular location">
    <subcellularLocation>
        <location evidence="1">Cytoplasm</location>
    </subcellularLocation>
</comment>
<comment type="similarity">
    <text evidence="1">Belongs to the KAE1 / TsaD family.</text>
</comment>
<organism>
    <name type="scientific">Nitrosomonas eutropha (strain DSM 101675 / C91 / Nm57)</name>
    <dbReference type="NCBI Taxonomy" id="335283"/>
    <lineage>
        <taxon>Bacteria</taxon>
        <taxon>Pseudomonadati</taxon>
        <taxon>Pseudomonadota</taxon>
        <taxon>Betaproteobacteria</taxon>
        <taxon>Nitrosomonadales</taxon>
        <taxon>Nitrosomonadaceae</taxon>
        <taxon>Nitrosomonas</taxon>
    </lineage>
</organism>
<dbReference type="EC" id="2.3.1.234" evidence="1"/>
<dbReference type="EMBL" id="CP000450">
    <property type="protein sequence ID" value="ABI58580.1"/>
    <property type="molecule type" value="Genomic_DNA"/>
</dbReference>
<dbReference type="RefSeq" id="WP_011633424.1">
    <property type="nucleotide sequence ID" value="NC_008344.1"/>
</dbReference>
<dbReference type="SMR" id="Q0AJ91"/>
<dbReference type="STRING" id="335283.Neut_0296"/>
<dbReference type="KEGG" id="net:Neut_0296"/>
<dbReference type="eggNOG" id="COG0533">
    <property type="taxonomic scope" value="Bacteria"/>
</dbReference>
<dbReference type="HOGENOM" id="CLU_023208_0_0_4"/>
<dbReference type="OrthoDB" id="9806197at2"/>
<dbReference type="Proteomes" id="UP000001966">
    <property type="component" value="Chromosome"/>
</dbReference>
<dbReference type="GO" id="GO:0005737">
    <property type="term" value="C:cytoplasm"/>
    <property type="evidence" value="ECO:0007669"/>
    <property type="project" value="UniProtKB-SubCell"/>
</dbReference>
<dbReference type="GO" id="GO:0005506">
    <property type="term" value="F:iron ion binding"/>
    <property type="evidence" value="ECO:0007669"/>
    <property type="project" value="UniProtKB-UniRule"/>
</dbReference>
<dbReference type="GO" id="GO:0061711">
    <property type="term" value="F:N(6)-L-threonylcarbamoyladenine synthase activity"/>
    <property type="evidence" value="ECO:0007669"/>
    <property type="project" value="UniProtKB-EC"/>
</dbReference>
<dbReference type="GO" id="GO:0002949">
    <property type="term" value="P:tRNA threonylcarbamoyladenosine modification"/>
    <property type="evidence" value="ECO:0007669"/>
    <property type="project" value="UniProtKB-UniRule"/>
</dbReference>
<dbReference type="CDD" id="cd24133">
    <property type="entry name" value="ASKHA_NBD_TsaD_bac"/>
    <property type="match status" value="1"/>
</dbReference>
<dbReference type="FunFam" id="3.30.420.40:FF:000012">
    <property type="entry name" value="tRNA N6-adenosine threonylcarbamoyltransferase"/>
    <property type="match status" value="1"/>
</dbReference>
<dbReference type="FunFam" id="3.30.420.40:FF:000040">
    <property type="entry name" value="tRNA N6-adenosine threonylcarbamoyltransferase"/>
    <property type="match status" value="1"/>
</dbReference>
<dbReference type="Gene3D" id="3.30.420.40">
    <property type="match status" value="2"/>
</dbReference>
<dbReference type="HAMAP" id="MF_01445">
    <property type="entry name" value="TsaD"/>
    <property type="match status" value="1"/>
</dbReference>
<dbReference type="InterPro" id="IPR043129">
    <property type="entry name" value="ATPase_NBD"/>
</dbReference>
<dbReference type="InterPro" id="IPR000905">
    <property type="entry name" value="Gcp-like_dom"/>
</dbReference>
<dbReference type="InterPro" id="IPR017861">
    <property type="entry name" value="KAE1/TsaD"/>
</dbReference>
<dbReference type="InterPro" id="IPR022450">
    <property type="entry name" value="TsaD"/>
</dbReference>
<dbReference type="NCBIfam" id="TIGR00329">
    <property type="entry name" value="gcp_kae1"/>
    <property type="match status" value="1"/>
</dbReference>
<dbReference type="NCBIfam" id="TIGR03723">
    <property type="entry name" value="T6A_TsaD_YgjD"/>
    <property type="match status" value="1"/>
</dbReference>
<dbReference type="PANTHER" id="PTHR11735">
    <property type="entry name" value="TRNA N6-ADENOSINE THREONYLCARBAMOYLTRANSFERASE"/>
    <property type="match status" value="1"/>
</dbReference>
<dbReference type="PANTHER" id="PTHR11735:SF6">
    <property type="entry name" value="TRNA N6-ADENOSINE THREONYLCARBAMOYLTRANSFERASE, MITOCHONDRIAL"/>
    <property type="match status" value="1"/>
</dbReference>
<dbReference type="Pfam" id="PF00814">
    <property type="entry name" value="TsaD"/>
    <property type="match status" value="1"/>
</dbReference>
<dbReference type="PRINTS" id="PR00789">
    <property type="entry name" value="OSIALOPTASE"/>
</dbReference>
<dbReference type="SUPFAM" id="SSF53067">
    <property type="entry name" value="Actin-like ATPase domain"/>
    <property type="match status" value="2"/>
</dbReference>
<name>TSAD_NITEC</name>
<evidence type="ECO:0000255" key="1">
    <source>
        <dbReference type="HAMAP-Rule" id="MF_01445"/>
    </source>
</evidence>
<protein>
    <recommendedName>
        <fullName evidence="1">tRNA N6-adenosine threonylcarbamoyltransferase</fullName>
        <ecNumber evidence="1">2.3.1.234</ecNumber>
    </recommendedName>
    <alternativeName>
        <fullName evidence="1">N6-L-threonylcarbamoyladenine synthase</fullName>
        <shortName evidence="1">t(6)A synthase</shortName>
    </alternativeName>
    <alternativeName>
        <fullName evidence="1">t(6)A37 threonylcarbamoyladenosine biosynthesis protein TsaD</fullName>
    </alternativeName>
    <alternativeName>
        <fullName evidence="1">tRNA threonylcarbamoyladenosine biosynthesis protein TsaD</fullName>
    </alternativeName>
</protein>
<accession>Q0AJ91</accession>